<keyword id="KW-0878">Amphibian defense peptide</keyword>
<keyword id="KW-0903">Direct protein sequencing</keyword>
<keyword id="KW-1213">G-protein coupled receptor impairing toxin</keyword>
<keyword id="KW-0964">Secreted</keyword>
<keyword id="KW-0765">Sulfation</keyword>
<keyword id="KW-0800">Toxin</keyword>
<keyword id="KW-0838">Vasoactive</keyword>
<keyword id="KW-0840">Vasodilator</keyword>
<sequence>RPPGFSPFRIY</sequence>
<accession>P86631</accession>
<feature type="peptide" id="PRO_0000404634" description="Phyllokinin" evidence="2">
    <location>
        <begin position="1"/>
        <end position="11"/>
    </location>
</feature>
<feature type="modified residue" description="Sulfotyrosine; partial" evidence="2">
    <location>
        <position position="11"/>
    </location>
</feature>
<feature type="unsure residue" description="I or L" evidence="2">
    <location>
        <position position="10"/>
    </location>
</feature>
<evidence type="ECO:0000250" key="1"/>
<evidence type="ECO:0000269" key="2">
    <source>
    </source>
</evidence>
<evidence type="ECO:0000303" key="3">
    <source>
    </source>
</evidence>
<evidence type="ECO:0000305" key="4"/>
<dbReference type="GO" id="GO:0005576">
    <property type="term" value="C:extracellular region"/>
    <property type="evidence" value="ECO:0007669"/>
    <property type="project" value="UniProtKB-SubCell"/>
</dbReference>
<dbReference type="GO" id="GO:0090729">
    <property type="term" value="F:toxin activity"/>
    <property type="evidence" value="ECO:0007669"/>
    <property type="project" value="UniProtKB-KW"/>
</dbReference>
<dbReference type="GO" id="GO:0006952">
    <property type="term" value="P:defense response"/>
    <property type="evidence" value="ECO:0007669"/>
    <property type="project" value="UniProtKB-KW"/>
</dbReference>
<dbReference type="GO" id="GO:0042311">
    <property type="term" value="P:vasodilation"/>
    <property type="evidence" value="ECO:0007669"/>
    <property type="project" value="UniProtKB-KW"/>
</dbReference>
<protein>
    <recommendedName>
        <fullName evidence="3">Phyllokinin</fullName>
    </recommendedName>
</protein>
<organism>
    <name type="scientific">Phasmahyla jandaia</name>
    <name type="common">Jandaia leaf frog</name>
    <name type="synonym">Phyllomedusa jandaia</name>
    <dbReference type="NCBI Taxonomy" id="762504"/>
    <lineage>
        <taxon>Eukaryota</taxon>
        <taxon>Metazoa</taxon>
        <taxon>Chordata</taxon>
        <taxon>Craniata</taxon>
        <taxon>Vertebrata</taxon>
        <taxon>Euteleostomi</taxon>
        <taxon>Amphibia</taxon>
        <taxon>Batrachia</taxon>
        <taxon>Anura</taxon>
        <taxon>Neobatrachia</taxon>
        <taxon>Hyloidea</taxon>
        <taxon>Hylidae</taxon>
        <taxon>Phyllomedusinae</taxon>
        <taxon>Phasmahyla</taxon>
    </lineage>
</organism>
<name>BRKP1_PHAJA</name>
<reference evidence="4" key="1">
    <citation type="journal article" date="2011" name="Toxicon">
        <title>Peptidomic dissection of the skin secretion of Phasmahyla jandaia (Bokermann and Sazima, 1978) (Anura, Hylidae, Phyllomedusinae).</title>
        <authorList>
            <person name="Rates B."/>
            <person name="Silva L.P."/>
            <person name="Ireno I.C."/>
            <person name="Leite F.S."/>
            <person name="Borges M.H."/>
            <person name="Bloch C. Jr."/>
            <person name="De Lima M.E."/>
            <person name="Pimenta A.M."/>
        </authorList>
    </citation>
    <scope>PROTEIN SEQUENCE</scope>
    <scope>SUBCELLULAR LOCATION</scope>
    <scope>TISSUE SPECIFICITY</scope>
    <scope>MASS SPECTROMETRY</scope>
    <scope>SULFATION AT TYR-11</scope>
    <source>
        <tissue evidence="2">Skin secretion</tissue>
    </source>
</reference>
<comment type="function">
    <text evidence="1">May produce in vitro relaxation of rat arterial smooth muscle and constriction of intestinal smooth muscle (By similarity). May target bradykinin receptors (BDKRB).</text>
</comment>
<comment type="subcellular location">
    <subcellularLocation>
        <location evidence="2">Secreted</location>
    </subcellularLocation>
</comment>
<comment type="tissue specificity">
    <text evidence="2">Expressed by the skin glands.</text>
</comment>
<comment type="mass spectrometry">
    <text>Sulfated.</text>
</comment>
<comment type="mass spectrometry"/>
<comment type="similarity">
    <text evidence="4">Belongs to the bradykinin-related peptide family.</text>
</comment>
<proteinExistence type="evidence at protein level"/>